<feature type="chain" id="PRO_0000266977" description="Probable GTP-binding protein EngB">
    <location>
        <begin position="1"/>
        <end position="215"/>
    </location>
</feature>
<feature type="domain" description="EngB-type G" evidence="1">
    <location>
        <begin position="26"/>
        <end position="200"/>
    </location>
</feature>
<feature type="binding site" evidence="1">
    <location>
        <begin position="34"/>
        <end position="41"/>
    </location>
    <ligand>
        <name>GTP</name>
        <dbReference type="ChEBI" id="CHEBI:37565"/>
    </ligand>
</feature>
<feature type="binding site" evidence="1">
    <location>
        <position position="41"/>
    </location>
    <ligand>
        <name>Mg(2+)</name>
        <dbReference type="ChEBI" id="CHEBI:18420"/>
    </ligand>
</feature>
<feature type="binding site" evidence="1">
    <location>
        <begin position="61"/>
        <end position="65"/>
    </location>
    <ligand>
        <name>GTP</name>
        <dbReference type="ChEBI" id="CHEBI:37565"/>
    </ligand>
</feature>
<feature type="binding site" evidence="1">
    <location>
        <position position="63"/>
    </location>
    <ligand>
        <name>Mg(2+)</name>
        <dbReference type="ChEBI" id="CHEBI:18420"/>
    </ligand>
</feature>
<feature type="binding site" evidence="1">
    <location>
        <begin position="79"/>
        <end position="82"/>
    </location>
    <ligand>
        <name>GTP</name>
        <dbReference type="ChEBI" id="CHEBI:37565"/>
    </ligand>
</feature>
<feature type="binding site" evidence="1">
    <location>
        <begin position="146"/>
        <end position="149"/>
    </location>
    <ligand>
        <name>GTP</name>
        <dbReference type="ChEBI" id="CHEBI:37565"/>
    </ligand>
</feature>
<feature type="binding site" evidence="1">
    <location>
        <begin position="179"/>
        <end position="181"/>
    </location>
    <ligand>
        <name>GTP</name>
        <dbReference type="ChEBI" id="CHEBI:37565"/>
    </ligand>
</feature>
<gene>
    <name evidence="1" type="primary">engB</name>
    <name type="ordered locus">VF_0075</name>
</gene>
<name>ENGB_ALIF1</name>
<evidence type="ECO:0000255" key="1">
    <source>
        <dbReference type="HAMAP-Rule" id="MF_00321"/>
    </source>
</evidence>
<keyword id="KW-0131">Cell cycle</keyword>
<keyword id="KW-0132">Cell division</keyword>
<keyword id="KW-0342">GTP-binding</keyword>
<keyword id="KW-0460">Magnesium</keyword>
<keyword id="KW-0479">Metal-binding</keyword>
<keyword id="KW-0547">Nucleotide-binding</keyword>
<keyword id="KW-1185">Reference proteome</keyword>
<keyword id="KW-0717">Septation</keyword>
<protein>
    <recommendedName>
        <fullName evidence="1">Probable GTP-binding protein EngB</fullName>
    </recommendedName>
</protein>
<organism>
    <name type="scientific">Aliivibrio fischeri (strain ATCC 700601 / ES114)</name>
    <name type="common">Vibrio fischeri</name>
    <dbReference type="NCBI Taxonomy" id="312309"/>
    <lineage>
        <taxon>Bacteria</taxon>
        <taxon>Pseudomonadati</taxon>
        <taxon>Pseudomonadota</taxon>
        <taxon>Gammaproteobacteria</taxon>
        <taxon>Vibrionales</taxon>
        <taxon>Vibrionaceae</taxon>
        <taxon>Aliivibrio</taxon>
    </lineage>
</organism>
<accession>Q5E8S6</accession>
<comment type="function">
    <text evidence="1">Necessary for normal cell division and for the maintenance of normal septation.</text>
</comment>
<comment type="cofactor">
    <cofactor evidence="1">
        <name>Mg(2+)</name>
        <dbReference type="ChEBI" id="CHEBI:18420"/>
    </cofactor>
</comment>
<comment type="similarity">
    <text evidence="1">Belongs to the TRAFAC class TrmE-Era-EngA-EngB-Septin-like GTPase superfamily. EngB GTPase family.</text>
</comment>
<dbReference type="EMBL" id="CP000020">
    <property type="protein sequence ID" value="AAW84570.1"/>
    <property type="molecule type" value="Genomic_DNA"/>
</dbReference>
<dbReference type="RefSeq" id="YP_203458.1">
    <property type="nucleotide sequence ID" value="NC_006840.2"/>
</dbReference>
<dbReference type="SMR" id="Q5E8S6"/>
<dbReference type="STRING" id="312309.VF_0075"/>
<dbReference type="EnsemblBacteria" id="AAW84570">
    <property type="protein sequence ID" value="AAW84570"/>
    <property type="gene ID" value="VF_0075"/>
</dbReference>
<dbReference type="GeneID" id="54162703"/>
<dbReference type="KEGG" id="vfi:VF_0075"/>
<dbReference type="PATRIC" id="fig|312309.11.peg.75"/>
<dbReference type="eggNOG" id="COG0218">
    <property type="taxonomic scope" value="Bacteria"/>
</dbReference>
<dbReference type="HOGENOM" id="CLU_033732_1_2_6"/>
<dbReference type="OrthoDB" id="9804921at2"/>
<dbReference type="Proteomes" id="UP000000537">
    <property type="component" value="Chromosome I"/>
</dbReference>
<dbReference type="GO" id="GO:0005829">
    <property type="term" value="C:cytosol"/>
    <property type="evidence" value="ECO:0007669"/>
    <property type="project" value="TreeGrafter"/>
</dbReference>
<dbReference type="GO" id="GO:0005525">
    <property type="term" value="F:GTP binding"/>
    <property type="evidence" value="ECO:0007669"/>
    <property type="project" value="UniProtKB-UniRule"/>
</dbReference>
<dbReference type="GO" id="GO:0046872">
    <property type="term" value="F:metal ion binding"/>
    <property type="evidence" value="ECO:0007669"/>
    <property type="project" value="UniProtKB-KW"/>
</dbReference>
<dbReference type="GO" id="GO:0000917">
    <property type="term" value="P:division septum assembly"/>
    <property type="evidence" value="ECO:0007669"/>
    <property type="project" value="UniProtKB-KW"/>
</dbReference>
<dbReference type="CDD" id="cd01876">
    <property type="entry name" value="YihA_EngB"/>
    <property type="match status" value="1"/>
</dbReference>
<dbReference type="FunFam" id="3.40.50.300:FF:000098">
    <property type="entry name" value="Probable GTP-binding protein EngB"/>
    <property type="match status" value="1"/>
</dbReference>
<dbReference type="Gene3D" id="3.40.50.300">
    <property type="entry name" value="P-loop containing nucleotide triphosphate hydrolases"/>
    <property type="match status" value="1"/>
</dbReference>
<dbReference type="HAMAP" id="MF_00321">
    <property type="entry name" value="GTPase_EngB"/>
    <property type="match status" value="1"/>
</dbReference>
<dbReference type="InterPro" id="IPR030393">
    <property type="entry name" value="G_ENGB_dom"/>
</dbReference>
<dbReference type="InterPro" id="IPR006073">
    <property type="entry name" value="GTP-bd"/>
</dbReference>
<dbReference type="InterPro" id="IPR019987">
    <property type="entry name" value="GTP-bd_ribosome_bio_YsxC"/>
</dbReference>
<dbReference type="InterPro" id="IPR027417">
    <property type="entry name" value="P-loop_NTPase"/>
</dbReference>
<dbReference type="NCBIfam" id="TIGR03598">
    <property type="entry name" value="GTPase_YsxC"/>
    <property type="match status" value="1"/>
</dbReference>
<dbReference type="PANTHER" id="PTHR11649:SF13">
    <property type="entry name" value="ENGB-TYPE G DOMAIN-CONTAINING PROTEIN"/>
    <property type="match status" value="1"/>
</dbReference>
<dbReference type="PANTHER" id="PTHR11649">
    <property type="entry name" value="MSS1/TRME-RELATED GTP-BINDING PROTEIN"/>
    <property type="match status" value="1"/>
</dbReference>
<dbReference type="Pfam" id="PF01926">
    <property type="entry name" value="MMR_HSR1"/>
    <property type="match status" value="1"/>
</dbReference>
<dbReference type="SUPFAM" id="SSF52540">
    <property type="entry name" value="P-loop containing nucleoside triphosphate hydrolases"/>
    <property type="match status" value="1"/>
</dbReference>
<dbReference type="PROSITE" id="PS51706">
    <property type="entry name" value="G_ENGB"/>
    <property type="match status" value="1"/>
</dbReference>
<proteinExistence type="inferred from homology"/>
<reference key="1">
    <citation type="journal article" date="2005" name="Proc. Natl. Acad. Sci. U.S.A.">
        <title>Complete genome sequence of Vibrio fischeri: a symbiotic bacterium with pathogenic congeners.</title>
        <authorList>
            <person name="Ruby E.G."/>
            <person name="Urbanowski M."/>
            <person name="Campbell J."/>
            <person name="Dunn A."/>
            <person name="Faini M."/>
            <person name="Gunsalus R."/>
            <person name="Lostroh P."/>
            <person name="Lupp C."/>
            <person name="McCann J."/>
            <person name="Millikan D."/>
            <person name="Schaefer A."/>
            <person name="Stabb E."/>
            <person name="Stevens A."/>
            <person name="Visick K."/>
            <person name="Whistler C."/>
            <person name="Greenberg E.P."/>
        </authorList>
    </citation>
    <scope>NUCLEOTIDE SEQUENCE [LARGE SCALE GENOMIC DNA]</scope>
    <source>
        <strain>ATCC 700601 / ES114</strain>
    </source>
</reference>
<sequence>MSKTIHYQKTHFITSAPDIRHLPEDEGIEVAFAGRSNAGKSSALNRLTNQKSLAKTSKTPGRTQLINLFKVEENCHIVDLPGYGFAQVPLEMKKKWQKSLGEYLQKRQCLQGLVVLMDIRHPLKDIDQQLVFWAVDQNIPVQILLTKADKLKSGARKAQVLKVREAAVDFGGEVEVDAFSSLKGIGVDKLRAKLDEWFAPAFELDDEFIEDLDAE</sequence>